<gene>
    <name evidence="1" type="primary">pdxT</name>
    <name type="ordered locus">Pars_0227</name>
</gene>
<accession>A4WHH5</accession>
<reference key="1">
    <citation type="submission" date="2007-04" db="EMBL/GenBank/DDBJ databases">
        <title>Complete sequence of Pyrobaculum arsenaticum DSM 13514.</title>
        <authorList>
            <consortium name="US DOE Joint Genome Institute"/>
            <person name="Copeland A."/>
            <person name="Lucas S."/>
            <person name="Lapidus A."/>
            <person name="Barry K."/>
            <person name="Glavina del Rio T."/>
            <person name="Dalin E."/>
            <person name="Tice H."/>
            <person name="Pitluck S."/>
            <person name="Chain P."/>
            <person name="Malfatti S."/>
            <person name="Shin M."/>
            <person name="Vergez L."/>
            <person name="Schmutz J."/>
            <person name="Larimer F."/>
            <person name="Land M."/>
            <person name="Hauser L."/>
            <person name="Kyrpides N."/>
            <person name="Mikhailova N."/>
            <person name="Cozen A.E."/>
            <person name="Fitz-Gibbon S.T."/>
            <person name="House C.H."/>
            <person name="Saltikov C."/>
            <person name="Lowe T.M."/>
            <person name="Richardson P."/>
        </authorList>
    </citation>
    <scope>NUCLEOTIDE SEQUENCE [LARGE SCALE GENOMIC DNA]</scope>
    <source>
        <strain>ATCC 700994 / DSM 13514 / JCM 11321 / PZ6</strain>
    </source>
</reference>
<feature type="chain" id="PRO_1000088053" description="Pyridoxal 5'-phosphate synthase subunit PdxT">
    <location>
        <begin position="1"/>
        <end position="204"/>
    </location>
</feature>
<feature type="active site" description="Nucleophile" evidence="1">
    <location>
        <position position="84"/>
    </location>
</feature>
<feature type="active site" description="Charge relay system" evidence="1">
    <location>
        <position position="184"/>
    </location>
</feature>
<feature type="active site" description="Charge relay system" evidence="1">
    <location>
        <position position="186"/>
    </location>
</feature>
<feature type="binding site" evidence="1">
    <location>
        <begin position="52"/>
        <end position="54"/>
    </location>
    <ligand>
        <name>L-glutamine</name>
        <dbReference type="ChEBI" id="CHEBI:58359"/>
    </ligand>
</feature>
<feature type="binding site" evidence="1">
    <location>
        <position position="116"/>
    </location>
    <ligand>
        <name>L-glutamine</name>
        <dbReference type="ChEBI" id="CHEBI:58359"/>
    </ligand>
</feature>
<feature type="binding site" evidence="1">
    <location>
        <begin position="143"/>
        <end position="144"/>
    </location>
    <ligand>
        <name>L-glutamine</name>
        <dbReference type="ChEBI" id="CHEBI:58359"/>
    </ligand>
</feature>
<proteinExistence type="inferred from homology"/>
<organism>
    <name type="scientific">Pyrobaculum arsenaticum (strain DSM 13514 / JCM 11321 / PZ6)</name>
    <dbReference type="NCBI Taxonomy" id="340102"/>
    <lineage>
        <taxon>Archaea</taxon>
        <taxon>Thermoproteota</taxon>
        <taxon>Thermoprotei</taxon>
        <taxon>Thermoproteales</taxon>
        <taxon>Thermoproteaceae</taxon>
        <taxon>Pyrobaculum</taxon>
    </lineage>
</organism>
<dbReference type="EC" id="4.3.3.6" evidence="1"/>
<dbReference type="EC" id="3.5.1.2" evidence="1"/>
<dbReference type="EMBL" id="CP000660">
    <property type="protein sequence ID" value="ABP49842.1"/>
    <property type="molecule type" value="Genomic_DNA"/>
</dbReference>
<dbReference type="SMR" id="A4WHH5"/>
<dbReference type="STRING" id="340102.Pars_0227"/>
<dbReference type="MEROPS" id="C26.A32"/>
<dbReference type="KEGG" id="pas:Pars_0227"/>
<dbReference type="HOGENOM" id="CLU_069674_2_0_2"/>
<dbReference type="OrthoDB" id="26717at2157"/>
<dbReference type="PhylomeDB" id="A4WHH5"/>
<dbReference type="UniPathway" id="UPA00245"/>
<dbReference type="Proteomes" id="UP000001567">
    <property type="component" value="Chromosome"/>
</dbReference>
<dbReference type="GO" id="GO:0005829">
    <property type="term" value="C:cytosol"/>
    <property type="evidence" value="ECO:0007669"/>
    <property type="project" value="TreeGrafter"/>
</dbReference>
<dbReference type="GO" id="GO:1903600">
    <property type="term" value="C:glutaminase complex"/>
    <property type="evidence" value="ECO:0007669"/>
    <property type="project" value="TreeGrafter"/>
</dbReference>
<dbReference type="GO" id="GO:0004359">
    <property type="term" value="F:glutaminase activity"/>
    <property type="evidence" value="ECO:0007669"/>
    <property type="project" value="UniProtKB-UniRule"/>
</dbReference>
<dbReference type="GO" id="GO:0036381">
    <property type="term" value="F:pyridoxal 5'-phosphate synthase (glutamine hydrolysing) activity"/>
    <property type="evidence" value="ECO:0007669"/>
    <property type="project" value="UniProtKB-UniRule"/>
</dbReference>
<dbReference type="GO" id="GO:0006543">
    <property type="term" value="P:glutamine catabolic process"/>
    <property type="evidence" value="ECO:0007669"/>
    <property type="project" value="UniProtKB-UniRule"/>
</dbReference>
<dbReference type="GO" id="GO:0042823">
    <property type="term" value="P:pyridoxal phosphate biosynthetic process"/>
    <property type="evidence" value="ECO:0007669"/>
    <property type="project" value="UniProtKB-UniRule"/>
</dbReference>
<dbReference type="GO" id="GO:0008614">
    <property type="term" value="P:pyridoxine metabolic process"/>
    <property type="evidence" value="ECO:0007669"/>
    <property type="project" value="TreeGrafter"/>
</dbReference>
<dbReference type="CDD" id="cd01749">
    <property type="entry name" value="GATase1_PB"/>
    <property type="match status" value="1"/>
</dbReference>
<dbReference type="Gene3D" id="3.40.50.880">
    <property type="match status" value="1"/>
</dbReference>
<dbReference type="HAMAP" id="MF_01615">
    <property type="entry name" value="PdxT"/>
    <property type="match status" value="1"/>
</dbReference>
<dbReference type="InterPro" id="IPR029062">
    <property type="entry name" value="Class_I_gatase-like"/>
</dbReference>
<dbReference type="InterPro" id="IPR002161">
    <property type="entry name" value="PdxT/SNO"/>
</dbReference>
<dbReference type="InterPro" id="IPR021196">
    <property type="entry name" value="PdxT/SNO_CS"/>
</dbReference>
<dbReference type="NCBIfam" id="TIGR03800">
    <property type="entry name" value="PLP_synth_Pdx2"/>
    <property type="match status" value="1"/>
</dbReference>
<dbReference type="PANTHER" id="PTHR31559">
    <property type="entry name" value="PYRIDOXAL 5'-PHOSPHATE SYNTHASE SUBUNIT SNO"/>
    <property type="match status" value="1"/>
</dbReference>
<dbReference type="PANTHER" id="PTHR31559:SF0">
    <property type="entry name" value="PYRIDOXAL 5'-PHOSPHATE SYNTHASE SUBUNIT SNO1-RELATED"/>
    <property type="match status" value="1"/>
</dbReference>
<dbReference type="Pfam" id="PF01174">
    <property type="entry name" value="SNO"/>
    <property type="match status" value="1"/>
</dbReference>
<dbReference type="PIRSF" id="PIRSF005639">
    <property type="entry name" value="Glut_amidoT_SNO"/>
    <property type="match status" value="1"/>
</dbReference>
<dbReference type="SUPFAM" id="SSF52317">
    <property type="entry name" value="Class I glutamine amidotransferase-like"/>
    <property type="match status" value="1"/>
</dbReference>
<dbReference type="PROSITE" id="PS01236">
    <property type="entry name" value="PDXT_SNO_1"/>
    <property type="match status" value="1"/>
</dbReference>
<dbReference type="PROSITE" id="PS51130">
    <property type="entry name" value="PDXT_SNO_2"/>
    <property type="match status" value="1"/>
</dbReference>
<comment type="function">
    <text evidence="1">Catalyzes the hydrolysis of glutamine to glutamate and ammonia as part of the biosynthesis of pyridoxal 5'-phosphate. The resulting ammonia molecule is channeled to the active site of PdxS.</text>
</comment>
<comment type="catalytic activity">
    <reaction evidence="1">
        <text>aldehydo-D-ribose 5-phosphate + D-glyceraldehyde 3-phosphate + L-glutamine = pyridoxal 5'-phosphate + L-glutamate + phosphate + 3 H2O + H(+)</text>
        <dbReference type="Rhea" id="RHEA:31507"/>
        <dbReference type="ChEBI" id="CHEBI:15377"/>
        <dbReference type="ChEBI" id="CHEBI:15378"/>
        <dbReference type="ChEBI" id="CHEBI:29985"/>
        <dbReference type="ChEBI" id="CHEBI:43474"/>
        <dbReference type="ChEBI" id="CHEBI:58273"/>
        <dbReference type="ChEBI" id="CHEBI:58359"/>
        <dbReference type="ChEBI" id="CHEBI:59776"/>
        <dbReference type="ChEBI" id="CHEBI:597326"/>
        <dbReference type="EC" id="4.3.3.6"/>
    </reaction>
</comment>
<comment type="catalytic activity">
    <reaction evidence="1">
        <text>L-glutamine + H2O = L-glutamate + NH4(+)</text>
        <dbReference type="Rhea" id="RHEA:15889"/>
        <dbReference type="ChEBI" id="CHEBI:15377"/>
        <dbReference type="ChEBI" id="CHEBI:28938"/>
        <dbReference type="ChEBI" id="CHEBI:29985"/>
        <dbReference type="ChEBI" id="CHEBI:58359"/>
        <dbReference type="EC" id="3.5.1.2"/>
    </reaction>
</comment>
<comment type="pathway">
    <text evidence="1">Cofactor biosynthesis; pyridoxal 5'-phosphate biosynthesis.</text>
</comment>
<comment type="subunit">
    <text evidence="1">In the presence of PdxS, forms a dodecamer of heterodimers. Only shows activity in the heterodimer.</text>
</comment>
<comment type="similarity">
    <text evidence="1">Belongs to the glutaminase PdxT/SNO family.</text>
</comment>
<evidence type="ECO:0000255" key="1">
    <source>
        <dbReference type="HAMAP-Rule" id="MF_01615"/>
    </source>
</evidence>
<sequence length="204" mass="21614">MKVGVLALQGDVEEHLEAFRRAAAELNISAEAVRVKRADQLDGLSALAIPGGESTTIGKLAQRLGILDRLRTVVESGVPTLATCAGAVLLAKEVRDSVVGPTGQPLLAVLNAAVVRNAYGRQRDSFEANVDVEGIGTVRAVFIRAPIFAKTWPPARAIAHVDHPRAGRAIVAVRQDHVLATAFHPELTTTAFHKAVLEMAAGRL</sequence>
<protein>
    <recommendedName>
        <fullName evidence="1">Pyridoxal 5'-phosphate synthase subunit PdxT</fullName>
        <ecNumber evidence="1">4.3.3.6</ecNumber>
    </recommendedName>
    <alternativeName>
        <fullName evidence="1">Pdx2</fullName>
    </alternativeName>
    <alternativeName>
        <fullName evidence="1">Pyridoxal 5'-phosphate synthase glutaminase subunit</fullName>
        <ecNumber evidence="1">3.5.1.2</ecNumber>
    </alternativeName>
</protein>
<keyword id="KW-0315">Glutamine amidotransferase</keyword>
<keyword id="KW-0378">Hydrolase</keyword>
<keyword id="KW-0456">Lyase</keyword>
<keyword id="KW-0663">Pyridoxal phosphate</keyword>
<name>PDXT_PYRAR</name>